<evidence type="ECO:0000255" key="1">
    <source>
        <dbReference type="HAMAP-Rule" id="MF_01322"/>
    </source>
</evidence>
<accession>A8ZV52</accession>
<feature type="chain" id="PRO_1000141768" description="DNA-directed RNA polymerase subunit beta'">
    <location>
        <begin position="1"/>
        <end position="1447"/>
    </location>
</feature>
<feature type="binding site" evidence="1">
    <location>
        <position position="70"/>
    </location>
    <ligand>
        <name>Zn(2+)</name>
        <dbReference type="ChEBI" id="CHEBI:29105"/>
        <label>1</label>
    </ligand>
</feature>
<feature type="binding site" evidence="1">
    <location>
        <position position="72"/>
    </location>
    <ligand>
        <name>Zn(2+)</name>
        <dbReference type="ChEBI" id="CHEBI:29105"/>
        <label>1</label>
    </ligand>
</feature>
<feature type="binding site" evidence="1">
    <location>
        <position position="85"/>
    </location>
    <ligand>
        <name>Zn(2+)</name>
        <dbReference type="ChEBI" id="CHEBI:29105"/>
        <label>1</label>
    </ligand>
</feature>
<feature type="binding site" evidence="1">
    <location>
        <position position="88"/>
    </location>
    <ligand>
        <name>Zn(2+)</name>
        <dbReference type="ChEBI" id="CHEBI:29105"/>
        <label>1</label>
    </ligand>
</feature>
<feature type="binding site" evidence="1">
    <location>
        <position position="460"/>
    </location>
    <ligand>
        <name>Mg(2+)</name>
        <dbReference type="ChEBI" id="CHEBI:18420"/>
    </ligand>
</feature>
<feature type="binding site" evidence="1">
    <location>
        <position position="462"/>
    </location>
    <ligand>
        <name>Mg(2+)</name>
        <dbReference type="ChEBI" id="CHEBI:18420"/>
    </ligand>
</feature>
<feature type="binding site" evidence="1">
    <location>
        <position position="464"/>
    </location>
    <ligand>
        <name>Mg(2+)</name>
        <dbReference type="ChEBI" id="CHEBI:18420"/>
    </ligand>
</feature>
<feature type="binding site" evidence="1">
    <location>
        <position position="890"/>
    </location>
    <ligand>
        <name>Zn(2+)</name>
        <dbReference type="ChEBI" id="CHEBI:29105"/>
        <label>2</label>
    </ligand>
</feature>
<feature type="binding site" evidence="1">
    <location>
        <position position="964"/>
    </location>
    <ligand>
        <name>Zn(2+)</name>
        <dbReference type="ChEBI" id="CHEBI:29105"/>
        <label>2</label>
    </ligand>
</feature>
<feature type="binding site" evidence="1">
    <location>
        <position position="971"/>
    </location>
    <ligand>
        <name>Zn(2+)</name>
        <dbReference type="ChEBI" id="CHEBI:29105"/>
        <label>2</label>
    </ligand>
</feature>
<feature type="binding site" evidence="1">
    <location>
        <position position="974"/>
    </location>
    <ligand>
        <name>Zn(2+)</name>
        <dbReference type="ChEBI" id="CHEBI:29105"/>
        <label>2</label>
    </ligand>
</feature>
<gene>
    <name evidence="1" type="primary">rpoC</name>
    <name type="ordered locus">Dole_0703</name>
</gene>
<name>RPOC_DESOH</name>
<dbReference type="EC" id="2.7.7.6" evidence="1"/>
<dbReference type="EMBL" id="CP000859">
    <property type="protein sequence ID" value="ABW66513.1"/>
    <property type="molecule type" value="Genomic_DNA"/>
</dbReference>
<dbReference type="RefSeq" id="WP_012174132.1">
    <property type="nucleotide sequence ID" value="NC_009943.1"/>
</dbReference>
<dbReference type="SMR" id="A8ZV52"/>
<dbReference type="STRING" id="96561.Dole_0703"/>
<dbReference type="KEGG" id="dol:Dole_0703"/>
<dbReference type="eggNOG" id="COG0086">
    <property type="taxonomic scope" value="Bacteria"/>
</dbReference>
<dbReference type="HOGENOM" id="CLU_000524_3_1_7"/>
<dbReference type="OrthoDB" id="9815296at2"/>
<dbReference type="Proteomes" id="UP000008561">
    <property type="component" value="Chromosome"/>
</dbReference>
<dbReference type="GO" id="GO:0000428">
    <property type="term" value="C:DNA-directed RNA polymerase complex"/>
    <property type="evidence" value="ECO:0007669"/>
    <property type="project" value="UniProtKB-KW"/>
</dbReference>
<dbReference type="GO" id="GO:0003677">
    <property type="term" value="F:DNA binding"/>
    <property type="evidence" value="ECO:0007669"/>
    <property type="project" value="UniProtKB-UniRule"/>
</dbReference>
<dbReference type="GO" id="GO:0003899">
    <property type="term" value="F:DNA-directed RNA polymerase activity"/>
    <property type="evidence" value="ECO:0007669"/>
    <property type="project" value="UniProtKB-UniRule"/>
</dbReference>
<dbReference type="GO" id="GO:0000287">
    <property type="term" value="F:magnesium ion binding"/>
    <property type="evidence" value="ECO:0007669"/>
    <property type="project" value="UniProtKB-UniRule"/>
</dbReference>
<dbReference type="GO" id="GO:0003755">
    <property type="term" value="F:peptidyl-prolyl cis-trans isomerase activity"/>
    <property type="evidence" value="ECO:0007669"/>
    <property type="project" value="InterPro"/>
</dbReference>
<dbReference type="GO" id="GO:0008270">
    <property type="term" value="F:zinc ion binding"/>
    <property type="evidence" value="ECO:0007669"/>
    <property type="project" value="UniProtKB-UniRule"/>
</dbReference>
<dbReference type="GO" id="GO:0006351">
    <property type="term" value="P:DNA-templated transcription"/>
    <property type="evidence" value="ECO:0007669"/>
    <property type="project" value="UniProtKB-UniRule"/>
</dbReference>
<dbReference type="CDD" id="cd02655">
    <property type="entry name" value="RNAP_beta'_C"/>
    <property type="match status" value="1"/>
</dbReference>
<dbReference type="CDD" id="cd01609">
    <property type="entry name" value="RNAP_beta'_N"/>
    <property type="match status" value="1"/>
</dbReference>
<dbReference type="FunFam" id="1.10.132.30:FF:000003">
    <property type="entry name" value="DNA-directed RNA polymerase subunit beta"/>
    <property type="match status" value="1"/>
</dbReference>
<dbReference type="FunFam" id="1.10.150.390:FF:000002">
    <property type="entry name" value="DNA-directed RNA polymerase subunit beta"/>
    <property type="match status" value="1"/>
</dbReference>
<dbReference type="Gene3D" id="1.10.132.30">
    <property type="match status" value="1"/>
</dbReference>
<dbReference type="Gene3D" id="1.10.150.390">
    <property type="match status" value="1"/>
</dbReference>
<dbReference type="Gene3D" id="1.10.1790.20">
    <property type="match status" value="1"/>
</dbReference>
<dbReference type="Gene3D" id="1.10.40.90">
    <property type="match status" value="1"/>
</dbReference>
<dbReference type="Gene3D" id="2.40.40.20">
    <property type="match status" value="1"/>
</dbReference>
<dbReference type="Gene3D" id="2.40.50.100">
    <property type="match status" value="3"/>
</dbReference>
<dbReference type="Gene3D" id="3.10.50.40">
    <property type="match status" value="1"/>
</dbReference>
<dbReference type="Gene3D" id="4.10.860.120">
    <property type="entry name" value="RNA polymerase II, clamp domain"/>
    <property type="match status" value="1"/>
</dbReference>
<dbReference type="Gene3D" id="1.10.274.100">
    <property type="entry name" value="RNA polymerase Rpb1, domain 3"/>
    <property type="match status" value="2"/>
</dbReference>
<dbReference type="HAMAP" id="MF_01322">
    <property type="entry name" value="RNApol_bact_RpoC"/>
    <property type="match status" value="1"/>
</dbReference>
<dbReference type="InterPro" id="IPR045867">
    <property type="entry name" value="DNA-dir_RpoC_beta_prime"/>
</dbReference>
<dbReference type="InterPro" id="IPR012754">
    <property type="entry name" value="DNA-dir_RpoC_beta_prime_bact"/>
</dbReference>
<dbReference type="InterPro" id="IPR046357">
    <property type="entry name" value="PPIase_dom_sf"/>
</dbReference>
<dbReference type="InterPro" id="IPR000722">
    <property type="entry name" value="RNA_pol_asu"/>
</dbReference>
<dbReference type="InterPro" id="IPR006592">
    <property type="entry name" value="RNA_pol_N"/>
</dbReference>
<dbReference type="InterPro" id="IPR007080">
    <property type="entry name" value="RNA_pol_Rpb1_1"/>
</dbReference>
<dbReference type="InterPro" id="IPR007066">
    <property type="entry name" value="RNA_pol_Rpb1_3"/>
</dbReference>
<dbReference type="InterPro" id="IPR042102">
    <property type="entry name" value="RNA_pol_Rpb1_3_sf"/>
</dbReference>
<dbReference type="InterPro" id="IPR007083">
    <property type="entry name" value="RNA_pol_Rpb1_4"/>
</dbReference>
<dbReference type="InterPro" id="IPR007081">
    <property type="entry name" value="RNA_pol_Rpb1_5"/>
</dbReference>
<dbReference type="InterPro" id="IPR044893">
    <property type="entry name" value="RNA_pol_Rpb1_clamp_domain"/>
</dbReference>
<dbReference type="InterPro" id="IPR038120">
    <property type="entry name" value="Rpb1_funnel_sf"/>
</dbReference>
<dbReference type="NCBIfam" id="TIGR02386">
    <property type="entry name" value="rpoC_TIGR"/>
    <property type="match status" value="1"/>
</dbReference>
<dbReference type="PANTHER" id="PTHR19376">
    <property type="entry name" value="DNA-DIRECTED RNA POLYMERASE"/>
    <property type="match status" value="1"/>
</dbReference>
<dbReference type="PANTHER" id="PTHR19376:SF54">
    <property type="entry name" value="DNA-DIRECTED RNA POLYMERASE SUBUNIT BETA"/>
    <property type="match status" value="1"/>
</dbReference>
<dbReference type="Pfam" id="PF04997">
    <property type="entry name" value="RNA_pol_Rpb1_1"/>
    <property type="match status" value="1"/>
</dbReference>
<dbReference type="Pfam" id="PF00623">
    <property type="entry name" value="RNA_pol_Rpb1_2"/>
    <property type="match status" value="2"/>
</dbReference>
<dbReference type="Pfam" id="PF04983">
    <property type="entry name" value="RNA_pol_Rpb1_3"/>
    <property type="match status" value="1"/>
</dbReference>
<dbReference type="Pfam" id="PF05000">
    <property type="entry name" value="RNA_pol_Rpb1_4"/>
    <property type="match status" value="1"/>
</dbReference>
<dbReference type="Pfam" id="PF04998">
    <property type="entry name" value="RNA_pol_Rpb1_5"/>
    <property type="match status" value="1"/>
</dbReference>
<dbReference type="SMART" id="SM00663">
    <property type="entry name" value="RPOLA_N"/>
    <property type="match status" value="1"/>
</dbReference>
<dbReference type="SUPFAM" id="SSF64484">
    <property type="entry name" value="beta and beta-prime subunits of DNA dependent RNA-polymerase"/>
    <property type="match status" value="1"/>
</dbReference>
<dbReference type="SUPFAM" id="SSF54534">
    <property type="entry name" value="FKBP-like"/>
    <property type="match status" value="1"/>
</dbReference>
<proteinExistence type="inferred from homology"/>
<reference key="1">
    <citation type="submission" date="2007-10" db="EMBL/GenBank/DDBJ databases">
        <title>Complete sequence of Desulfococcus oleovorans Hxd3.</title>
        <authorList>
            <consortium name="US DOE Joint Genome Institute"/>
            <person name="Copeland A."/>
            <person name="Lucas S."/>
            <person name="Lapidus A."/>
            <person name="Barry K."/>
            <person name="Glavina del Rio T."/>
            <person name="Dalin E."/>
            <person name="Tice H."/>
            <person name="Pitluck S."/>
            <person name="Kiss H."/>
            <person name="Brettin T."/>
            <person name="Bruce D."/>
            <person name="Detter J.C."/>
            <person name="Han C."/>
            <person name="Schmutz J."/>
            <person name="Larimer F."/>
            <person name="Land M."/>
            <person name="Hauser L."/>
            <person name="Kyrpides N."/>
            <person name="Kim E."/>
            <person name="Wawrik B."/>
            <person name="Richardson P."/>
        </authorList>
    </citation>
    <scope>NUCLEOTIDE SEQUENCE [LARGE SCALE GENOMIC DNA]</scope>
    <source>
        <strain>DSM 6200 / JCM 39069 / Hxd3</strain>
    </source>
</reference>
<keyword id="KW-0240">DNA-directed RNA polymerase</keyword>
<keyword id="KW-0460">Magnesium</keyword>
<keyword id="KW-0479">Metal-binding</keyword>
<keyword id="KW-0548">Nucleotidyltransferase</keyword>
<keyword id="KW-1185">Reference proteome</keyword>
<keyword id="KW-0804">Transcription</keyword>
<keyword id="KW-0808">Transferase</keyword>
<keyword id="KW-0862">Zinc</keyword>
<comment type="function">
    <text evidence="1">DNA-dependent RNA polymerase catalyzes the transcription of DNA into RNA using the four ribonucleoside triphosphates as substrates.</text>
</comment>
<comment type="catalytic activity">
    <reaction evidence="1">
        <text>RNA(n) + a ribonucleoside 5'-triphosphate = RNA(n+1) + diphosphate</text>
        <dbReference type="Rhea" id="RHEA:21248"/>
        <dbReference type="Rhea" id="RHEA-COMP:14527"/>
        <dbReference type="Rhea" id="RHEA-COMP:17342"/>
        <dbReference type="ChEBI" id="CHEBI:33019"/>
        <dbReference type="ChEBI" id="CHEBI:61557"/>
        <dbReference type="ChEBI" id="CHEBI:140395"/>
        <dbReference type="EC" id="2.7.7.6"/>
    </reaction>
</comment>
<comment type="cofactor">
    <cofactor evidence="1">
        <name>Mg(2+)</name>
        <dbReference type="ChEBI" id="CHEBI:18420"/>
    </cofactor>
    <text evidence="1">Binds 1 Mg(2+) ion per subunit.</text>
</comment>
<comment type="cofactor">
    <cofactor evidence="1">
        <name>Zn(2+)</name>
        <dbReference type="ChEBI" id="CHEBI:29105"/>
    </cofactor>
    <text evidence="1">Binds 2 Zn(2+) ions per subunit.</text>
</comment>
<comment type="subunit">
    <text evidence="1">The RNAP catalytic core consists of 2 alpha, 1 beta, 1 beta' and 1 omega subunit. When a sigma factor is associated with the core the holoenzyme is formed, which can initiate transcription.</text>
</comment>
<comment type="similarity">
    <text evidence="1">Belongs to the RNA polymerase beta' chain family.</text>
</comment>
<protein>
    <recommendedName>
        <fullName evidence="1">DNA-directed RNA polymerase subunit beta'</fullName>
        <shortName evidence="1">RNAP subunit beta'</shortName>
        <ecNumber evidence="1">2.7.7.6</ecNumber>
    </recommendedName>
    <alternativeName>
        <fullName evidence="1">RNA polymerase subunit beta'</fullName>
    </alternativeName>
    <alternativeName>
        <fullName evidence="1">Transcriptase subunit beta'</fullName>
    </alternativeName>
</protein>
<sequence>METVYDFFAKPINPRRFSGVKIALASSEQILQWSFGEITKPETINYRTFRPERDGLFCAKIFGPTKDFECNCGKYKRMKHRGVTCEKCGVEVIQSKVRRERMAHIKLASPVSHIWFLKSLPSKIGNVLDLTLKELERVLYFDSYIVIDPKNTDLSPMQLLSEEAYQEARAKYGSDFEAAIGAEAIKALLDKVDLEVLSTQLREDLKATSVEAKRKKLAKRLRIVDAFAKSGVSPSWMIIEVVPVLPPDLRPLVPLEGGRFATSDLNDLYRRVINRNNRLKRLMELKAPDIIIRNEKRMLQEAVDVLFDNGRHGRAVTGSNKRPLKSLTDTLKGKQGRFRQNLLGKRVDYSGRTVITIGPNLRLHQCGLPKQMALELFKPFIYYRLEQKGYVSTVKSAKKMVEREVPEVWDTLEEVVKEYPVMLNRAPTLHRLGIQAFEPVLIEGKAIQLHPLVCTAFNADFDGDQMAVHIPLSVEAQIEARVLMLATNNILSPANGSPIIVPTQDIVLGTYYMTKTIEGTKGEGVVFSGPEEVVAAFDSGTVGLHAAISVRINGKLYDTSVGRVLVWEVIPQQIVPVFKTIHFSAKKEANSVLAEIKRGASFVDMQKKHGDESGVDYERAMKKEDMITEFGLSEADADYLFSLKEGECSDIIGISDGYRLFKLAGYRSEIPFEMVNRPLGKKAIRELVDGAYRNTGLKSTVILADRLKDIGYKYSTLGGLSISIDAMVVPEKKWDIIKAAEKKVEEIANQYKEGLITQGEKYNKVVDIWSKATDDIANEMMEAMRTDAGTPTGRFNPVFMMADSGARGSKDQMRQLAGMRGLMAKPSGEIIETPIVANFREGLSVLQYFISTHGARKGLADTALKTANSGYLTRRLADVAQDCIITEDDCGAMMGVEVEALVEGGEIIERLVDRVIGRIALEDIRDPFTDEVIVRGGEEISERHLSVIENSGLTKIWIRSVLTCKSETGICAKCYGRDFAHGKLVEHGQAVGILAAQSIGEPGTQLTMRTFHIGGTASRKVERAEIRARVDGFVRLGDLKLVENAEKKLVVMNRRGGEFTIVNKAGREVEKCPVIYGATIVVKDGQDIQAGDVLAAWDPFTTPIVAEVAGTVKFGDIVKGKTMQEMVDPVTGKSSQTIIDESRTHDVRPRISIKDDENKTATLPDGKSKARYPLPVGAVLLVEENDTIRAGDVIAKLPRATTKTKDITGGLPRVAELFEVRKPKEAAILSEINGYISIAKATTKKGKQKVTVAPVDGGEPREYLIPRGKHINVYDGDYIRAGEEIVAGSANPQDVMNIRGDVALARYLVDEVQEVYRLQGVTINDKHIEVIVRQMMRRVKIKEIGDTEFIDDEQVDRQRFEDTNREVIANGGKPAVGEPLILGITKASLATESFISAASFQETTKVLTDASIAGKTDYLRGLKENVIMGRLIPAGTGFVEYRKAAEK</sequence>
<organism>
    <name type="scientific">Desulfosudis oleivorans (strain DSM 6200 / JCM 39069 / Hxd3)</name>
    <name type="common">Desulfococcus oleovorans</name>
    <dbReference type="NCBI Taxonomy" id="96561"/>
    <lineage>
        <taxon>Bacteria</taxon>
        <taxon>Pseudomonadati</taxon>
        <taxon>Thermodesulfobacteriota</taxon>
        <taxon>Desulfobacteria</taxon>
        <taxon>Desulfobacterales</taxon>
        <taxon>Desulfosudaceae</taxon>
        <taxon>Desulfosudis</taxon>
    </lineage>
</organism>